<dbReference type="GO" id="GO:0005576">
    <property type="term" value="C:extracellular region"/>
    <property type="evidence" value="ECO:0007669"/>
    <property type="project" value="UniProtKB-SubCell"/>
</dbReference>
<dbReference type="GO" id="GO:0008200">
    <property type="term" value="F:ion channel inhibitor activity"/>
    <property type="evidence" value="ECO:0007669"/>
    <property type="project" value="InterPro"/>
</dbReference>
<dbReference type="GO" id="GO:0017080">
    <property type="term" value="F:sodium channel regulator activity"/>
    <property type="evidence" value="ECO:0007669"/>
    <property type="project" value="UniProtKB-KW"/>
</dbReference>
<dbReference type="GO" id="GO:0090729">
    <property type="term" value="F:toxin activity"/>
    <property type="evidence" value="ECO:0007669"/>
    <property type="project" value="UniProtKB-KW"/>
</dbReference>
<dbReference type="InterPro" id="IPR044062">
    <property type="entry name" value="LCN-type_CS_alpha_beta_dom"/>
</dbReference>
<dbReference type="PROSITE" id="PS51863">
    <property type="entry name" value="LCN_CSAB"/>
    <property type="match status" value="1"/>
</dbReference>
<proteinExistence type="evidence at protein level"/>
<sequence length="39" mass="4025">GGKEGYPLNSSNGCKSGRFAGTNSNENTECKGXDAENGY</sequence>
<accession>P0DL25</accession>
<protein>
    <recommendedName>
        <fullName>Putative beta-neurotoxin</fullName>
    </recommendedName>
</protein>
<evidence type="ECO:0000250" key="1"/>
<evidence type="ECO:0000255" key="2">
    <source>
        <dbReference type="PROSITE-ProRule" id="PRU01210"/>
    </source>
</evidence>
<evidence type="ECO:0000256" key="3">
    <source>
        <dbReference type="SAM" id="MobiDB-lite"/>
    </source>
</evidence>
<evidence type="ECO:0000269" key="4">
    <source>
    </source>
</evidence>
<evidence type="ECO:0000305" key="5"/>
<reference key="1">
    <citation type="journal article" date="2006" name="Biochim. Biophys. Acta">
        <title>Proteomic analysis of the venom and characterization of toxins specific for Na+ - and K+ -channels from the Colombian scorpion Tityus pachyurus.</title>
        <authorList>
            <person name="Barona J."/>
            <person name="Batista C.V.F."/>
            <person name="Zamudio F.Z."/>
            <person name="Gomez-Lagunas F."/>
            <person name="Wanke E."/>
            <person name="Otero R."/>
            <person name="Possani L.D."/>
        </authorList>
    </citation>
    <scope>PROTEIN SEQUENCE</scope>
    <scope>SUBCELLULAR LOCATION</scope>
    <scope>TISSUE SPECIFICITY</scope>
    <source>
        <tissue>Venom</tissue>
    </source>
</reference>
<name>SCXU_TITPA</name>
<feature type="chain" id="PRO_0000422257" description="Putative beta-neurotoxin">
    <location>
        <begin position="1"/>
        <end position="39" status="greater than"/>
    </location>
</feature>
<feature type="domain" description="LCN-type CS-alpha/beta" evidence="2">
    <location>
        <begin position="3"/>
        <end position="39" status="greater than"/>
    </location>
</feature>
<feature type="region of interest" description="Disordered" evidence="3">
    <location>
        <begin position="1"/>
        <end position="39"/>
    </location>
</feature>
<feature type="compositionally biased region" description="Basic and acidic residues" evidence="3">
    <location>
        <begin position="28"/>
        <end position="39"/>
    </location>
</feature>
<feature type="disulfide bond" evidence="1">
    <location>
        <begin position="14"/>
        <end status="unknown"/>
    </location>
</feature>
<feature type="disulfide bond" evidence="1">
    <location>
        <begin position="30"/>
        <end status="unknown"/>
    </location>
</feature>
<feature type="non-terminal residue">
    <location>
        <position position="39"/>
    </location>
</feature>
<keyword id="KW-0903">Direct protein sequencing</keyword>
<keyword id="KW-1015">Disulfide bond</keyword>
<keyword id="KW-0872">Ion channel impairing toxin</keyword>
<keyword id="KW-0528">Neurotoxin</keyword>
<keyword id="KW-0964">Secreted</keyword>
<keyword id="KW-0800">Toxin</keyword>
<keyword id="KW-0738">Voltage-gated sodium channel impairing toxin</keyword>
<comment type="function">
    <text evidence="1">Beta toxins bind voltage-independently at site-4 of sodium channels (Nav) and shift the voltage of activation toward more negative potentials thereby affecting sodium channel activation and promoting spontaneous and repetitive firing.</text>
</comment>
<comment type="subcellular location">
    <subcellularLocation>
        <location evidence="4">Secreted</location>
    </subcellularLocation>
</comment>
<comment type="tissue specificity">
    <text evidence="4">Expressed by the venom gland.</text>
</comment>
<comment type="domain">
    <text evidence="5">Has the structural arrangement of an alpha-helix connected to antiparallel beta-sheets by disulfide bonds (CS-alpha/beta).</text>
</comment>
<comment type="similarity">
    <text evidence="5">Belongs to the long (4 C-C) scorpion toxin superfamily. Sodium channel inhibitor family. Beta subfamily.</text>
</comment>
<organism>
    <name type="scientific">Tityus pachyurus</name>
    <name type="common">Colombian scorpion</name>
    <dbReference type="NCBI Taxonomy" id="288781"/>
    <lineage>
        <taxon>Eukaryota</taxon>
        <taxon>Metazoa</taxon>
        <taxon>Ecdysozoa</taxon>
        <taxon>Arthropoda</taxon>
        <taxon>Chelicerata</taxon>
        <taxon>Arachnida</taxon>
        <taxon>Scorpiones</taxon>
        <taxon>Buthida</taxon>
        <taxon>Buthoidea</taxon>
        <taxon>Buthidae</taxon>
        <taxon>Tityus</taxon>
    </lineage>
</organism>